<organism>
    <name type="scientific">Cyriopagopus hainanus</name>
    <name type="common">Chinese bird spider</name>
    <name type="synonym">Haplopelma hainanum</name>
    <dbReference type="NCBI Taxonomy" id="209901"/>
    <lineage>
        <taxon>Eukaryota</taxon>
        <taxon>Metazoa</taxon>
        <taxon>Ecdysozoa</taxon>
        <taxon>Arthropoda</taxon>
        <taxon>Chelicerata</taxon>
        <taxon>Arachnida</taxon>
        <taxon>Araneae</taxon>
        <taxon>Mygalomorphae</taxon>
        <taxon>Theraphosidae</taxon>
        <taxon>Haplopelma</taxon>
    </lineage>
</organism>
<protein>
    <recommendedName>
        <fullName>Kunitz-type U15-theraphotoxin-Hhn1d</fullName>
        <shortName>U15-theraphotoxin-Hhn1d</shortName>
    </recommendedName>
    <alternativeName>
        <fullName>Kunitz-type serine protease inhibitor hainantoxin-XI-4</fullName>
        <shortName>HNTX-XI-4</shortName>
    </alternativeName>
</protein>
<evidence type="ECO:0000250" key="1"/>
<evidence type="ECO:0000250" key="2">
    <source>
        <dbReference type="UniProtKB" id="P68425"/>
    </source>
</evidence>
<evidence type="ECO:0000255" key="3"/>
<evidence type="ECO:0000255" key="4">
    <source>
        <dbReference type="PROSITE-ProRule" id="PRU00031"/>
    </source>
</evidence>
<evidence type="ECO:0000305" key="5"/>
<evidence type="ECO:0000305" key="6">
    <source>
    </source>
</evidence>
<proteinExistence type="inferred from homology"/>
<feature type="signal peptide" evidence="3">
    <location>
        <begin position="1"/>
        <end position="27"/>
    </location>
</feature>
<feature type="propeptide" id="PRO_0000400984" evidence="1">
    <location>
        <begin position="28"/>
        <end position="33"/>
    </location>
</feature>
<feature type="peptide" id="PRO_0000400985" description="Kunitz-type U15-theraphotoxin-Hhn1d">
    <location>
        <begin position="34"/>
        <end position="88"/>
    </location>
</feature>
<feature type="domain" description="BPTI/Kunitz inhibitor" evidence="4">
    <location>
        <begin position="37"/>
        <end position="85"/>
    </location>
</feature>
<feature type="disulfide bond" evidence="4">
    <location>
        <begin position="37"/>
        <end position="85"/>
    </location>
</feature>
<feature type="disulfide bond" evidence="4">
    <location>
        <begin position="60"/>
        <end position="81"/>
    </location>
</feature>
<comment type="function">
    <text evidence="2">Serine protease inhibitor that inhibits trypsin at a molar ratio of 1:1.</text>
</comment>
<comment type="subcellular location">
    <subcellularLocation>
        <location evidence="6">Secreted</location>
    </subcellularLocation>
</comment>
<comment type="tissue specificity">
    <text evidence="6">Expressed by the venom gland.</text>
</comment>
<comment type="similarity">
    <text evidence="5">Belongs to the venom Kunitz-type family. 03 (sub-Kunitz) subfamily.</text>
</comment>
<accession>D2Y2F5</accession>
<dbReference type="EMBL" id="GU293032">
    <property type="protein sequence ID" value="ADB56848.1"/>
    <property type="molecule type" value="mRNA"/>
</dbReference>
<dbReference type="SMR" id="D2Y2F5"/>
<dbReference type="ArachnoServer" id="AS001637">
    <property type="toxin name" value="U15-theraphotoxin-Hhn1d"/>
</dbReference>
<dbReference type="GO" id="GO:0005615">
    <property type="term" value="C:extracellular space"/>
    <property type="evidence" value="ECO:0007669"/>
    <property type="project" value="TreeGrafter"/>
</dbReference>
<dbReference type="GO" id="GO:0015459">
    <property type="term" value="F:potassium channel regulator activity"/>
    <property type="evidence" value="ECO:0007669"/>
    <property type="project" value="UniProtKB-KW"/>
</dbReference>
<dbReference type="GO" id="GO:0004867">
    <property type="term" value="F:serine-type endopeptidase inhibitor activity"/>
    <property type="evidence" value="ECO:0007669"/>
    <property type="project" value="UniProtKB-KW"/>
</dbReference>
<dbReference type="GO" id="GO:0090729">
    <property type="term" value="F:toxin activity"/>
    <property type="evidence" value="ECO:0007669"/>
    <property type="project" value="UniProtKB-KW"/>
</dbReference>
<dbReference type="GO" id="GO:0044562">
    <property type="term" value="P:envenomation resulting in negative regulation of voltage-gated potassium channel activity in another organism"/>
    <property type="evidence" value="ECO:0007669"/>
    <property type="project" value="UniProtKB-ARBA"/>
</dbReference>
<dbReference type="CDD" id="cd22598">
    <property type="entry name" value="Kunitz_huwentoxin"/>
    <property type="match status" value="1"/>
</dbReference>
<dbReference type="FunFam" id="4.10.410.10:FF:000020">
    <property type="entry name" value="Collagen, type VI, alpha 3"/>
    <property type="match status" value="1"/>
</dbReference>
<dbReference type="Gene3D" id="4.10.410.10">
    <property type="entry name" value="Pancreatic trypsin inhibitor Kunitz domain"/>
    <property type="match status" value="1"/>
</dbReference>
<dbReference type="InterPro" id="IPR002223">
    <property type="entry name" value="Kunitz_BPTI"/>
</dbReference>
<dbReference type="InterPro" id="IPR036880">
    <property type="entry name" value="Kunitz_BPTI_sf"/>
</dbReference>
<dbReference type="InterPro" id="IPR050098">
    <property type="entry name" value="TFPI/VKTCI-like"/>
</dbReference>
<dbReference type="PANTHER" id="PTHR10083">
    <property type="entry name" value="KUNITZ-TYPE PROTEASE INHIBITOR-RELATED"/>
    <property type="match status" value="1"/>
</dbReference>
<dbReference type="PANTHER" id="PTHR10083:SF328">
    <property type="entry name" value="TISSUE FACTOR PATHWAY INHIBITOR"/>
    <property type="match status" value="1"/>
</dbReference>
<dbReference type="Pfam" id="PF00014">
    <property type="entry name" value="Kunitz_BPTI"/>
    <property type="match status" value="1"/>
</dbReference>
<dbReference type="PRINTS" id="PR00759">
    <property type="entry name" value="BASICPTASE"/>
</dbReference>
<dbReference type="SMART" id="SM00131">
    <property type="entry name" value="KU"/>
    <property type="match status" value="1"/>
</dbReference>
<dbReference type="SUPFAM" id="SSF57362">
    <property type="entry name" value="BPTI-like"/>
    <property type="match status" value="1"/>
</dbReference>
<dbReference type="PROSITE" id="PS50279">
    <property type="entry name" value="BPTI_KUNITZ_2"/>
    <property type="match status" value="1"/>
</dbReference>
<keyword id="KW-1015">Disulfide bond</keyword>
<keyword id="KW-0646">Protease inhibitor</keyword>
<keyword id="KW-0964">Secreted</keyword>
<keyword id="KW-0722">Serine protease inhibitor</keyword>
<keyword id="KW-0732">Signal</keyword>
<sequence>MGTARFLRAVLLLSVLLMVTFPALLSAEHHDGRVDICRLPSDSGECSRFFGMWYFDGTTCTKFVYGGYGGNDNRFPTEKACMKRCAKA</sequence>
<reference key="1">
    <citation type="journal article" date="2010" name="J. Proteome Res.">
        <title>Molecular diversification of peptide toxins from the tarantula Haplopelma hainanum (Ornithoctonus hainana) venom based on transcriptomic, peptidomic, and genomic analyses.</title>
        <authorList>
            <person name="Tang X."/>
            <person name="Zhang Y."/>
            <person name="Hu W."/>
            <person name="Xu D."/>
            <person name="Tao H."/>
            <person name="Yang X."/>
            <person name="Li Y."/>
            <person name="Jiang L."/>
            <person name="Liang S."/>
        </authorList>
    </citation>
    <scope>NUCLEOTIDE SEQUENCE [LARGE SCALE MRNA]</scope>
    <source>
        <tissue>Venom gland</tissue>
    </source>
</reference>
<name>VKT4_CYRHA</name>